<proteinExistence type="evidence at protein level"/>
<feature type="chain" id="PRO_0000269917" description="Macrolide export ATP-binding/permease protein MacB">
    <location>
        <begin position="1"/>
        <end position="644"/>
    </location>
</feature>
<feature type="topological domain" description="Cytoplasmic" evidence="1 6">
    <location>
        <begin position="1"/>
        <end position="268"/>
    </location>
</feature>
<feature type="transmembrane region" description="Helical" evidence="2">
    <location>
        <begin position="269"/>
        <end position="289"/>
    </location>
</feature>
<feature type="topological domain" description="Periplasmic" evidence="1 6">
    <location>
        <begin position="290"/>
        <end position="523"/>
    </location>
</feature>
<feature type="transmembrane region" description="Helical" evidence="2">
    <location>
        <begin position="524"/>
        <end position="544"/>
    </location>
</feature>
<feature type="topological domain" description="Cytoplasmic" evidence="1 6">
    <location>
        <begin position="545"/>
        <end position="573"/>
    </location>
</feature>
<feature type="transmembrane region" description="Helical" evidence="2">
    <location>
        <begin position="574"/>
        <end position="594"/>
    </location>
</feature>
<feature type="topological domain" description="Periplasmic" evidence="1 6">
    <location>
        <begin position="595"/>
        <end position="607"/>
    </location>
</feature>
<feature type="transmembrane region" description="Helical" evidence="2">
    <location>
        <begin position="608"/>
        <end position="628"/>
    </location>
</feature>
<feature type="topological domain" description="Cytoplasmic" evidence="1 6">
    <location>
        <begin position="629"/>
        <end position="644"/>
    </location>
</feature>
<feature type="domain" description="ABC transporter" evidence="2">
    <location>
        <begin position="4"/>
        <end position="242"/>
    </location>
</feature>
<feature type="binding site" evidence="2">
    <location>
        <begin position="40"/>
        <end position="47"/>
    </location>
    <ligand>
        <name>ATP</name>
        <dbReference type="ChEBI" id="CHEBI:30616"/>
    </ligand>
</feature>
<feature type="strand" evidence="8">
    <location>
        <begin position="2"/>
        <end position="14"/>
    </location>
</feature>
<feature type="strand" evidence="8">
    <location>
        <begin position="20"/>
        <end position="31"/>
    </location>
</feature>
<feature type="strand" evidence="8">
    <location>
        <begin position="35"/>
        <end position="41"/>
    </location>
</feature>
<feature type="helix" evidence="8">
    <location>
        <begin position="46"/>
        <end position="53"/>
    </location>
</feature>
<feature type="strand" evidence="8">
    <location>
        <begin position="60"/>
        <end position="66"/>
    </location>
</feature>
<feature type="strand" evidence="8">
    <location>
        <begin position="69"/>
        <end position="71"/>
    </location>
</feature>
<feature type="helix" evidence="8">
    <location>
        <begin position="76"/>
        <end position="85"/>
    </location>
</feature>
<feature type="strand" evidence="8">
    <location>
        <begin position="87"/>
        <end position="90"/>
    </location>
</feature>
<feature type="helix" evidence="8">
    <location>
        <begin position="102"/>
        <end position="111"/>
    </location>
</feature>
<feature type="turn" evidence="8">
    <location>
        <begin position="112"/>
        <end position="114"/>
    </location>
</feature>
<feature type="helix" evidence="8">
    <location>
        <begin position="117"/>
        <end position="130"/>
    </location>
</feature>
<feature type="helix" evidence="8">
    <location>
        <begin position="134"/>
        <end position="136"/>
    </location>
</feature>
<feature type="helix" evidence="8">
    <location>
        <begin position="141"/>
        <end position="143"/>
    </location>
</feature>
<feature type="helix" evidence="8">
    <location>
        <begin position="146"/>
        <end position="157"/>
    </location>
</feature>
<feature type="turn" evidence="8">
    <location>
        <begin position="158"/>
        <end position="161"/>
    </location>
</feature>
<feature type="strand" evidence="8">
    <location>
        <begin position="163"/>
        <end position="169"/>
    </location>
</feature>
<feature type="turn" evidence="8">
    <location>
        <begin position="170"/>
        <end position="173"/>
    </location>
</feature>
<feature type="helix" evidence="8">
    <location>
        <begin position="176"/>
        <end position="191"/>
    </location>
</feature>
<feature type="strand" evidence="8">
    <location>
        <begin position="195"/>
        <end position="199"/>
    </location>
</feature>
<feature type="helix" evidence="8">
    <location>
        <begin position="203"/>
        <end position="207"/>
    </location>
</feature>
<feature type="strand" evidence="8">
    <location>
        <begin position="210"/>
        <end position="216"/>
    </location>
</feature>
<feature type="strand" evidence="8">
    <location>
        <begin position="219"/>
        <end position="227"/>
    </location>
</feature>
<feature type="helix" evidence="8">
    <location>
        <begin position="247"/>
        <end position="263"/>
    </location>
</feature>
<feature type="turn" evidence="7">
    <location>
        <begin position="297"/>
        <end position="299"/>
    </location>
</feature>
<feature type="strand" evidence="7">
    <location>
        <begin position="303"/>
        <end position="314"/>
    </location>
</feature>
<feature type="helix" evidence="7">
    <location>
        <begin position="319"/>
        <end position="323"/>
    </location>
</feature>
<feature type="helix" evidence="7">
    <location>
        <begin position="329"/>
        <end position="336"/>
    </location>
</feature>
<feature type="strand" evidence="7">
    <location>
        <begin position="341"/>
        <end position="356"/>
    </location>
</feature>
<feature type="strand" evidence="7">
    <location>
        <begin position="359"/>
        <end position="369"/>
    </location>
</feature>
<feature type="helix" evidence="7">
    <location>
        <begin position="373"/>
        <end position="377"/>
    </location>
</feature>
<feature type="strand" evidence="7">
    <location>
        <begin position="381"/>
        <end position="384"/>
    </location>
</feature>
<feature type="helix" evidence="7">
    <location>
        <begin position="389"/>
        <end position="394"/>
    </location>
</feature>
<feature type="strand" evidence="7">
    <location>
        <begin position="398"/>
        <end position="402"/>
    </location>
</feature>
<feature type="helix" evidence="7">
    <location>
        <begin position="403"/>
        <end position="410"/>
    </location>
</feature>
<feature type="strand" evidence="7">
    <location>
        <begin position="419"/>
        <end position="422"/>
    </location>
</feature>
<feature type="strand" evidence="7">
    <location>
        <begin position="425"/>
        <end position="433"/>
    </location>
</feature>
<feature type="strand" evidence="7">
    <location>
        <begin position="447"/>
        <end position="451"/>
    </location>
</feature>
<feature type="helix" evidence="7">
    <location>
        <begin position="452"/>
        <end position="458"/>
    </location>
</feature>
<feature type="strand" evidence="7">
    <location>
        <begin position="462"/>
        <end position="464"/>
    </location>
</feature>
<feature type="strand" evidence="7">
    <location>
        <begin position="466"/>
        <end position="472"/>
    </location>
</feature>
<feature type="strand" evidence="8">
    <location>
        <begin position="474"/>
        <end position="476"/>
    </location>
</feature>
<feature type="helix" evidence="7">
    <location>
        <begin position="478"/>
        <end position="493"/>
    </location>
</feature>
<feature type="strand" evidence="7">
    <location>
        <begin position="498"/>
        <end position="502"/>
    </location>
</feature>
<feature type="helix" evidence="7">
    <location>
        <begin position="503"/>
        <end position="511"/>
    </location>
</feature>
<feature type="helix" evidence="8">
    <location>
        <begin position="548"/>
        <end position="556"/>
    </location>
</feature>
<feature type="helix" evidence="8">
    <location>
        <begin position="561"/>
        <end position="597"/>
    </location>
</feature>
<feature type="helix" evidence="8">
    <location>
        <begin position="609"/>
        <end position="633"/>
    </location>
</feature>
<feature type="helix" evidence="8">
    <location>
        <begin position="637"/>
        <end position="641"/>
    </location>
</feature>
<comment type="function">
    <text evidence="5">Part of the tripartite efflux system MacAB-TdeA. MacB is a non-canonical ABC transporter that contains transmembrane domains (TMD), which form a pore in the inner membrane, and an ATP-binding domain (NBD), which is responsible for energy generation. Confers resistance against macrolides.</text>
</comment>
<comment type="subunit">
    <text evidence="5">Homodimer. Part of the tripartite efflux system MacAB-TdeA, which is composed of an inner membrane transporter, MacB, a periplasmic membrane fusion protein, MacA, and an outer membrane component, TdeA. The complex forms a large protein conduit and can translocate molecules across both the inner and outer membranes. Interacts with MacA.</text>
</comment>
<comment type="subcellular location">
    <subcellularLocation>
        <location evidence="2">Cell inner membrane</location>
        <topology evidence="2">Multi-pass membrane protein</topology>
    </subcellularLocation>
</comment>
<comment type="disruption phenotype">
    <text evidence="3">Mutation does not produce a noticeable phenotype or alter the drug resistance profile and the hemolytic activity of A.actinomycetemcomitans.</text>
</comment>
<comment type="similarity">
    <text evidence="2">Belongs to the ABC transporter superfamily. Macrolide exporter (TC 3.A.1.122) family.</text>
</comment>
<comment type="sequence caution" evidence="6">
    <conflict type="erroneous initiation">
        <sequence resource="EMBL-CDS" id="ABD38132"/>
    </conflict>
    <text>Extended N-terminus.</text>
</comment>
<protein>
    <recommendedName>
        <fullName evidence="2">Macrolide export ATP-binding/permease protein MacB</fullName>
        <ecNumber evidence="2">7.6.2.-</ecNumber>
    </recommendedName>
</protein>
<organism>
    <name type="scientific">Aggregatibacter actinomycetemcomitans</name>
    <name type="common">Actinobacillus actinomycetemcomitans</name>
    <name type="synonym">Haemophilus actinomycetemcomitans</name>
    <dbReference type="NCBI Taxonomy" id="714"/>
    <lineage>
        <taxon>Bacteria</taxon>
        <taxon>Pseudomonadati</taxon>
        <taxon>Pseudomonadota</taxon>
        <taxon>Gammaproteobacteria</taxon>
        <taxon>Pasteurellales</taxon>
        <taxon>Pasteurellaceae</taxon>
        <taxon>Aggregatibacter</taxon>
    </lineage>
</organism>
<accession>Q2EHL8</accession>
<name>MACB_AGGAC</name>
<reference key="1">
    <citation type="journal article" date="2007" name="Gene">
        <title>TdeA, a TolC-like protein required for toxin and drug export in Aggregatibacter (Actinobacillus) actinomycetemcomitans.</title>
        <authorList>
            <person name="Crosby J.A."/>
            <person name="Kachlany S.C."/>
        </authorList>
    </citation>
    <scope>NUCLEOTIDE SEQUENCE [GENOMIC DNA]</scope>
    <scope>DISRUPTION PHENOTYPE</scope>
    <source>
        <strain>IDH781</strain>
    </source>
</reference>
<reference key="2">
    <citation type="journal article" date="2009" name="Biochemistry">
        <title>Crystal structure of the periplasmic region of MacB, a noncanonic ABC transporter.</title>
        <authorList>
            <person name="Xu Y."/>
            <person name="Sim S.H."/>
            <person name="Nam K.H."/>
            <person name="Jin X.L."/>
            <person name="Kim H.M."/>
            <person name="Hwang K.Y."/>
            <person name="Lee K."/>
            <person name="Ha N.C."/>
        </authorList>
    </citation>
    <scope>X-RAY CRYSTALLOGRAPHY (2.00 ANGSTROMS) OF 293-518</scope>
    <scope>FUNCTION</scope>
    <scope>SUBUNIT</scope>
</reference>
<gene>
    <name evidence="2 4" type="primary">macB</name>
</gene>
<sequence>MNIIEIKQLNRYFGEGENRVHVLKDISLSIERGDFVAIMGQSGSGKSTLMNIIGCLDTATGGSSKIDGKETIELTNDQLSDLRSQKFGFIFQRYNLLSSLTAAENVALPAIYAGMPQSQRLERAKQLLEKLGLGDKWQNKPNQLSGGQQQRVSIARALMNGGEIILADEPTGALDSHSGENVMEILRQLHEEGHTIIMVTHDKHIAASANRIIEIKDGEIISDTQKRQVKSAVKNPSVFKGRFGFSKDQLMEAFRMSVSAIVAHKMRSLLTMLGIIIGITSVVSVVALGNGSQQKILENIRGIGTNTMTIFNGNGFGDRRSRHIQNLKISDANTLSKQSYIQSVTPNTSSSGILVVGNKSFTSANLYGIGEQYFDVEGLKLKQGRLLTEDDVDQSNQVVVLDESAKKAIFANENPLGKTVIFNKRPFRVIGVVSDQQLGGFPGNSLNLYSPYSTVLNKITGGSRIGSITVKISDDVNSTVAEKSLTELLKSLHGKKDFFIMNSDTIKQTIENTTGTMKLLISSIAFISLIVGGIGVMNIMLVSVTERTKEIGVRMAIGARQINILQQFLIEAVLICLIGGVAGILLSVLIGVLFNSFITDFSMDFSTASIVTAVLFSTLIGVLFGYMPAKKAAELNPITALAQE</sequence>
<dbReference type="EC" id="7.6.2.-" evidence="2"/>
<dbReference type="EMBL" id="DQ378165">
    <property type="protein sequence ID" value="ABD38132.1"/>
    <property type="status" value="ALT_INIT"/>
    <property type="molecule type" value="Genomic_DNA"/>
</dbReference>
<dbReference type="RefSeq" id="WP_025298382.1">
    <property type="nucleotide sequence ID" value="NZ_JABKAF010000004.1"/>
</dbReference>
<dbReference type="PDB" id="3FTJ">
    <property type="method" value="X-ray"/>
    <property type="resolution" value="2.00 A"/>
    <property type="chains" value="A=293-518"/>
</dbReference>
<dbReference type="PDB" id="5LIL">
    <property type="method" value="X-ray"/>
    <property type="resolution" value="3.35 A"/>
    <property type="chains" value="A/B=1-644"/>
</dbReference>
<dbReference type="PDB" id="5LJ6">
    <property type="method" value="X-ray"/>
    <property type="resolution" value="3.90 A"/>
    <property type="chains" value="A=1-644"/>
</dbReference>
<dbReference type="PDB" id="5LJ7">
    <property type="method" value="X-ray"/>
    <property type="resolution" value="3.25 A"/>
    <property type="chains" value="A/B=1-644"/>
</dbReference>
<dbReference type="PDBsum" id="3FTJ"/>
<dbReference type="PDBsum" id="5LIL"/>
<dbReference type="PDBsum" id="5LJ6"/>
<dbReference type="PDBsum" id="5LJ7"/>
<dbReference type="SMR" id="Q2EHL8"/>
<dbReference type="STRING" id="714.ACT75_10875"/>
<dbReference type="TCDB" id="3.A.1.122.35">
    <property type="family name" value="the atp-binding cassette (abc) superfamily"/>
</dbReference>
<dbReference type="eggNOG" id="COG0577">
    <property type="taxonomic scope" value="Bacteria"/>
</dbReference>
<dbReference type="eggNOG" id="COG1136">
    <property type="taxonomic scope" value="Bacteria"/>
</dbReference>
<dbReference type="EvolutionaryTrace" id="Q2EHL8"/>
<dbReference type="GO" id="GO:0005886">
    <property type="term" value="C:plasma membrane"/>
    <property type="evidence" value="ECO:0007669"/>
    <property type="project" value="UniProtKB-SubCell"/>
</dbReference>
<dbReference type="GO" id="GO:0005524">
    <property type="term" value="F:ATP binding"/>
    <property type="evidence" value="ECO:0007669"/>
    <property type="project" value="UniProtKB-KW"/>
</dbReference>
<dbReference type="GO" id="GO:0016887">
    <property type="term" value="F:ATP hydrolysis activity"/>
    <property type="evidence" value="ECO:0007669"/>
    <property type="project" value="InterPro"/>
</dbReference>
<dbReference type="GO" id="GO:0022857">
    <property type="term" value="F:transmembrane transporter activity"/>
    <property type="evidence" value="ECO:0007669"/>
    <property type="project" value="TreeGrafter"/>
</dbReference>
<dbReference type="GO" id="GO:0046677">
    <property type="term" value="P:response to antibiotic"/>
    <property type="evidence" value="ECO:0007669"/>
    <property type="project" value="UniProtKB-KW"/>
</dbReference>
<dbReference type="CDD" id="cd03255">
    <property type="entry name" value="ABC_MJ0796_LolCDE_FtsE"/>
    <property type="match status" value="1"/>
</dbReference>
<dbReference type="FunFam" id="3.40.50.300:FF:000032">
    <property type="entry name" value="Export ABC transporter ATP-binding protein"/>
    <property type="match status" value="1"/>
</dbReference>
<dbReference type="Gene3D" id="3.40.50.300">
    <property type="entry name" value="P-loop containing nucleotide triphosphate hydrolases"/>
    <property type="match status" value="1"/>
</dbReference>
<dbReference type="InterPro" id="IPR003593">
    <property type="entry name" value="AAA+_ATPase"/>
</dbReference>
<dbReference type="InterPro" id="IPR003838">
    <property type="entry name" value="ABC3_permease_C"/>
</dbReference>
<dbReference type="InterPro" id="IPR003439">
    <property type="entry name" value="ABC_transporter-like_ATP-bd"/>
</dbReference>
<dbReference type="InterPro" id="IPR017871">
    <property type="entry name" value="ABC_transporter-like_CS"/>
</dbReference>
<dbReference type="InterPro" id="IPR017911">
    <property type="entry name" value="MacB-like_ATP-bd"/>
</dbReference>
<dbReference type="InterPro" id="IPR025857">
    <property type="entry name" value="MacB_PCD"/>
</dbReference>
<dbReference type="InterPro" id="IPR050250">
    <property type="entry name" value="Macrolide_Exporter_MacB"/>
</dbReference>
<dbReference type="InterPro" id="IPR027417">
    <property type="entry name" value="P-loop_NTPase"/>
</dbReference>
<dbReference type="PANTHER" id="PTHR30572:SF14">
    <property type="entry name" value="MACROLIDE EXPORT ATP-BINDING_PERMEASE PROTEIN MACB"/>
    <property type="match status" value="1"/>
</dbReference>
<dbReference type="PANTHER" id="PTHR30572">
    <property type="entry name" value="MEMBRANE COMPONENT OF TRANSPORTER-RELATED"/>
    <property type="match status" value="1"/>
</dbReference>
<dbReference type="Pfam" id="PF00005">
    <property type="entry name" value="ABC_tran"/>
    <property type="match status" value="1"/>
</dbReference>
<dbReference type="Pfam" id="PF02687">
    <property type="entry name" value="FtsX"/>
    <property type="match status" value="1"/>
</dbReference>
<dbReference type="Pfam" id="PF12704">
    <property type="entry name" value="MacB_PCD"/>
    <property type="match status" value="1"/>
</dbReference>
<dbReference type="SMART" id="SM00382">
    <property type="entry name" value="AAA"/>
    <property type="match status" value="1"/>
</dbReference>
<dbReference type="SUPFAM" id="SSF52540">
    <property type="entry name" value="P-loop containing nucleoside triphosphate hydrolases"/>
    <property type="match status" value="1"/>
</dbReference>
<dbReference type="PROSITE" id="PS00211">
    <property type="entry name" value="ABC_TRANSPORTER_1"/>
    <property type="match status" value="1"/>
</dbReference>
<dbReference type="PROSITE" id="PS50893">
    <property type="entry name" value="ABC_TRANSPORTER_2"/>
    <property type="match status" value="1"/>
</dbReference>
<dbReference type="PROSITE" id="PS51267">
    <property type="entry name" value="MACB"/>
    <property type="match status" value="1"/>
</dbReference>
<keyword id="KW-0002">3D-structure</keyword>
<keyword id="KW-0046">Antibiotic resistance</keyword>
<keyword id="KW-0067">ATP-binding</keyword>
<keyword id="KW-0997">Cell inner membrane</keyword>
<keyword id="KW-1003">Cell membrane</keyword>
<keyword id="KW-0472">Membrane</keyword>
<keyword id="KW-0547">Nucleotide-binding</keyword>
<keyword id="KW-1278">Translocase</keyword>
<keyword id="KW-0812">Transmembrane</keyword>
<keyword id="KW-1133">Transmembrane helix</keyword>
<keyword id="KW-0813">Transport</keyword>
<evidence type="ECO:0000250" key="1">
    <source>
        <dbReference type="UniProtKB" id="P75831"/>
    </source>
</evidence>
<evidence type="ECO:0000255" key="2">
    <source>
        <dbReference type="HAMAP-Rule" id="MF_01720"/>
    </source>
</evidence>
<evidence type="ECO:0000269" key="3">
    <source>
    </source>
</evidence>
<evidence type="ECO:0000303" key="4">
    <source>
    </source>
</evidence>
<evidence type="ECO:0000303" key="5">
    <source>
    </source>
</evidence>
<evidence type="ECO:0000305" key="6"/>
<evidence type="ECO:0007829" key="7">
    <source>
        <dbReference type="PDB" id="3FTJ"/>
    </source>
</evidence>
<evidence type="ECO:0007829" key="8">
    <source>
        <dbReference type="PDB" id="5LJ7"/>
    </source>
</evidence>